<accession>Q2N2K4</accession>
<accession>Q2N2K5</accession>
<evidence type="ECO:0000250" key="1"/>
<evidence type="ECO:0000255" key="2"/>
<evidence type="ECO:0000305" key="3"/>
<keyword id="KW-0150">Chloroplast</keyword>
<keyword id="KW-0418">Kinase</keyword>
<keyword id="KW-0472">Membrane</keyword>
<keyword id="KW-0934">Plastid</keyword>
<keyword id="KW-1185">Reference proteome</keyword>
<keyword id="KW-0808">Transferase</keyword>
<keyword id="KW-0809">Transit peptide</keyword>
<keyword id="KW-0812">Transmembrane</keyword>
<keyword id="KW-1133">Transmembrane helix</keyword>
<proteinExistence type="evidence at transcript level"/>
<sequence length="303" mass="32582">MAAAAAWTGAASPNSLLLSRSPPHAAALAPSPGSSMRRRLLLGVGTPAVAALAAAAPPAVLQDGAVTVLITAGAYSLVRVFDELTERRLIEKSLSRKVVHVLSGVLFMSSWPLFSNSTEARYFAAVVPFLNSMRLLIYGLRLYTDEALVKSVTREGKPEELLRGPLYYVLVLLFSVLVFWRESPIGIVSLSMMSGGDGFADIVGRRYGSAKLPFNRKKSWAGSISMFISGFLLSAMMMLYFSSLGYIDVIWEEALGKLALVALAATVVECVPVTEVVDDNISVPLATMLVAFLLFSSNRTIVN</sequence>
<feature type="transit peptide" description="Chloroplast" evidence="2">
    <location>
        <begin position="1"/>
        <end position="49"/>
    </location>
</feature>
<feature type="chain" id="PRO_0000226596" description="Probable phytol kinase, chloroplastic">
    <location>
        <begin position="50"/>
        <end position="303"/>
    </location>
</feature>
<feature type="transmembrane region" description="Helical" evidence="2">
    <location>
        <begin position="98"/>
        <end position="118"/>
    </location>
</feature>
<feature type="transmembrane region" description="Helical" evidence="2">
    <location>
        <begin position="122"/>
        <end position="144"/>
    </location>
</feature>
<feature type="transmembrane region" description="Helical" evidence="2">
    <location>
        <begin position="168"/>
        <end position="188"/>
    </location>
</feature>
<feature type="transmembrane region" description="Helical" evidence="2">
    <location>
        <begin position="227"/>
        <end position="247"/>
    </location>
</feature>
<feature type="transmembrane region" description="Helical" evidence="2">
    <location>
        <begin position="254"/>
        <end position="274"/>
    </location>
</feature>
<feature type="transmembrane region" description="Helical" evidence="2">
    <location>
        <begin position="276"/>
        <end position="296"/>
    </location>
</feature>
<feature type="sequence conflict" description="In Ref. 1; ABA42672." evidence="3" ref="1">
    <original>F</original>
    <variation>V</variation>
    <location>
        <position position="114"/>
    </location>
</feature>
<protein>
    <recommendedName>
        <fullName>Probable phytol kinase, chloroplastic</fullName>
        <ecNumber>2.7.1.182</ecNumber>
    </recommendedName>
</protein>
<dbReference type="EC" id="2.7.1.182"/>
<dbReference type="EMBL" id="DQ163023">
    <property type="protein sequence ID" value="ABA42672.1"/>
    <property type="status" value="ALT_INIT"/>
    <property type="molecule type" value="mRNA"/>
</dbReference>
<dbReference type="EMBL" id="DQ163024">
    <property type="protein sequence ID" value="ABA42673.1"/>
    <property type="molecule type" value="mRNA"/>
</dbReference>
<dbReference type="RefSeq" id="NP_001105847.1">
    <property type="nucleotide sequence ID" value="NM_001112377.1"/>
</dbReference>
<dbReference type="FunCoup" id="Q2N2K4">
    <property type="interactions" value="102"/>
</dbReference>
<dbReference type="STRING" id="4577.Q2N2K4"/>
<dbReference type="PaxDb" id="4577-GRMZM2G104538_P01"/>
<dbReference type="EnsemblPlants" id="Zm00001eb066790_T002">
    <property type="protein sequence ID" value="Zm00001eb066790_P002"/>
    <property type="gene ID" value="Zm00001eb066790"/>
</dbReference>
<dbReference type="GeneID" id="732748"/>
<dbReference type="Gramene" id="Zm00001eb066790_T002">
    <property type="protein sequence ID" value="Zm00001eb066790_P002"/>
    <property type="gene ID" value="Zm00001eb066790"/>
</dbReference>
<dbReference type="KEGG" id="zma:732748"/>
<dbReference type="eggNOG" id="KOG4453">
    <property type="taxonomic scope" value="Eukaryota"/>
</dbReference>
<dbReference type="HOGENOM" id="CLU_058561_2_1_1"/>
<dbReference type="InParanoid" id="Q2N2K4"/>
<dbReference type="OMA" id="SWPIFST"/>
<dbReference type="OrthoDB" id="5673at2759"/>
<dbReference type="UniPathway" id="UPA00160"/>
<dbReference type="Proteomes" id="UP000007305">
    <property type="component" value="Chromosome 2"/>
</dbReference>
<dbReference type="ExpressionAtlas" id="Q2N2K4">
    <property type="expression patterns" value="baseline and differential"/>
</dbReference>
<dbReference type="GO" id="GO:0009507">
    <property type="term" value="C:chloroplast"/>
    <property type="evidence" value="ECO:0000318"/>
    <property type="project" value="GO_Central"/>
</dbReference>
<dbReference type="GO" id="GO:0031969">
    <property type="term" value="C:chloroplast membrane"/>
    <property type="evidence" value="ECO:0007669"/>
    <property type="project" value="UniProtKB-SubCell"/>
</dbReference>
<dbReference type="GO" id="GO:0010276">
    <property type="term" value="F:phytol kinase activity"/>
    <property type="evidence" value="ECO:0000318"/>
    <property type="project" value="GO_Central"/>
</dbReference>
<dbReference type="GO" id="GO:0010189">
    <property type="term" value="P:vitamin E biosynthetic process"/>
    <property type="evidence" value="ECO:0000318"/>
    <property type="project" value="GO_Central"/>
</dbReference>
<dbReference type="InterPro" id="IPR039606">
    <property type="entry name" value="Phytol/farnesol_kinase"/>
</dbReference>
<dbReference type="PANTHER" id="PTHR32523:SF8">
    <property type="entry name" value="DOLICHOL KINASE"/>
    <property type="match status" value="1"/>
</dbReference>
<dbReference type="PANTHER" id="PTHR32523">
    <property type="entry name" value="PHYTOL KINASE 1, CHLOROPLASTIC"/>
    <property type="match status" value="1"/>
</dbReference>
<reference key="1">
    <citation type="journal article" date="2006" name="Plant Cell">
        <title>The Arabidopsis vitamin E pathway gene5-1 mutant reveals a critical role for phytol kinase in seed tocopherol biosynthesis.</title>
        <authorList>
            <person name="Valentin H.E."/>
            <person name="Lincoln K."/>
            <person name="Moshiri F."/>
            <person name="Jensen P.K."/>
            <person name="Qi Q."/>
            <person name="Venkatesh T.V."/>
            <person name="Karunanandaa B."/>
            <person name="Baszis S.R."/>
            <person name="Norris S.R."/>
            <person name="Savidge B."/>
            <person name="Gruys K.J."/>
            <person name="Last R.L."/>
        </authorList>
    </citation>
    <scope>NUCLEOTIDE SEQUENCE [MRNA]</scope>
</reference>
<organism>
    <name type="scientific">Zea mays</name>
    <name type="common">Maize</name>
    <dbReference type="NCBI Taxonomy" id="4577"/>
    <lineage>
        <taxon>Eukaryota</taxon>
        <taxon>Viridiplantae</taxon>
        <taxon>Streptophyta</taxon>
        <taxon>Embryophyta</taxon>
        <taxon>Tracheophyta</taxon>
        <taxon>Spermatophyta</taxon>
        <taxon>Magnoliopsida</taxon>
        <taxon>Liliopsida</taxon>
        <taxon>Poales</taxon>
        <taxon>Poaceae</taxon>
        <taxon>PACMAD clade</taxon>
        <taxon>Panicoideae</taxon>
        <taxon>Andropogonodae</taxon>
        <taxon>Andropogoneae</taxon>
        <taxon>Tripsacinae</taxon>
        <taxon>Zea</taxon>
    </lineage>
</organism>
<name>PHYK_MAIZE</name>
<comment type="function">
    <text evidence="1">Involved in the activation and reutilization of phytol from chlorophyll degradation in plant metabolism, including tocopherol biosynthesis. Catalyzes the conversion of phytol to phytol monophosphate (PMP) (By similarity).</text>
</comment>
<comment type="catalytic activity">
    <reaction>
        <text>phytol + CTP = phytyl phosphate + CDP + H(+)</text>
        <dbReference type="Rhea" id="RHEA:38055"/>
        <dbReference type="ChEBI" id="CHEBI:15378"/>
        <dbReference type="ChEBI" id="CHEBI:17327"/>
        <dbReference type="ChEBI" id="CHEBI:37563"/>
        <dbReference type="ChEBI" id="CHEBI:58069"/>
        <dbReference type="ChEBI" id="CHEBI:75483"/>
        <dbReference type="EC" id="2.7.1.182"/>
    </reaction>
</comment>
<comment type="pathway">
    <text>Cofactor biosynthesis; tocopherol biosynthesis.</text>
</comment>
<comment type="subcellular location">
    <subcellularLocation>
        <location evidence="3">Plastid</location>
        <location evidence="3">Chloroplast membrane</location>
        <topology evidence="3">Multi-pass membrane protein</topology>
    </subcellularLocation>
</comment>
<comment type="similarity">
    <text evidence="3">Belongs to the polyprenol kinase family.</text>
</comment>
<comment type="sequence caution" evidence="3">
    <conflict type="erroneous initiation">
        <sequence resource="EMBL-CDS" id="ABA42672"/>
    </conflict>
</comment>